<comment type="function">
    <text evidence="1">May play a role in DNA repair. It seems to be involved in an RecBC-independent recombinational process of DNA repair. It may act with RecF and RecO.</text>
</comment>
<comment type="similarity">
    <text evidence="1">Belongs to the RecR family.</text>
</comment>
<protein>
    <recommendedName>
        <fullName evidence="1">Recombination protein RecR</fullName>
    </recommendedName>
</protein>
<proteinExistence type="inferred from homology"/>
<name>RECR_GEOSM</name>
<sequence>MLHFSGSLTRLVGELKKLPGVGEKSALRLAFHLLKHPNNIEALAQSLLQVGERVHLCSVCFAITEDDPCWICSGERDSGTICVVEEPQDLMALERSRAFGGRYHVLQGALSPLNGVTPKDLRIAELMQRLQGGEVREVLIATNFTVEGEATALYLTRMIKPLSIKVTRLAHGIPVGSDLEYVDAATVQRAVEGRSEL</sequence>
<organism>
    <name type="scientific">Geobacter sp. (strain M21)</name>
    <dbReference type="NCBI Taxonomy" id="443144"/>
    <lineage>
        <taxon>Bacteria</taxon>
        <taxon>Pseudomonadati</taxon>
        <taxon>Thermodesulfobacteriota</taxon>
        <taxon>Desulfuromonadia</taxon>
        <taxon>Geobacterales</taxon>
        <taxon>Geobacteraceae</taxon>
        <taxon>Geobacter</taxon>
    </lineage>
</organism>
<gene>
    <name evidence="1" type="primary">recR</name>
    <name type="ordered locus">GM21_0193</name>
</gene>
<keyword id="KW-0227">DNA damage</keyword>
<keyword id="KW-0233">DNA recombination</keyword>
<keyword id="KW-0234">DNA repair</keyword>
<keyword id="KW-0479">Metal-binding</keyword>
<keyword id="KW-0862">Zinc</keyword>
<keyword id="KW-0863">Zinc-finger</keyword>
<feature type="chain" id="PRO_1000201862" description="Recombination protein RecR">
    <location>
        <begin position="1"/>
        <end position="197"/>
    </location>
</feature>
<feature type="domain" description="Toprim" evidence="1">
    <location>
        <begin position="79"/>
        <end position="174"/>
    </location>
</feature>
<feature type="zinc finger region" description="C4-type" evidence="1">
    <location>
        <begin position="57"/>
        <end position="72"/>
    </location>
</feature>
<evidence type="ECO:0000255" key="1">
    <source>
        <dbReference type="HAMAP-Rule" id="MF_00017"/>
    </source>
</evidence>
<dbReference type="EMBL" id="CP001661">
    <property type="protein sequence ID" value="ACT16278.1"/>
    <property type="molecule type" value="Genomic_DNA"/>
</dbReference>
<dbReference type="SMR" id="C6E8Y9"/>
<dbReference type="STRING" id="443144.GM21_0193"/>
<dbReference type="KEGG" id="gem:GM21_0193"/>
<dbReference type="eggNOG" id="COG0353">
    <property type="taxonomic scope" value="Bacteria"/>
</dbReference>
<dbReference type="HOGENOM" id="CLU_060739_1_0_7"/>
<dbReference type="OrthoDB" id="9802672at2"/>
<dbReference type="GO" id="GO:0003677">
    <property type="term" value="F:DNA binding"/>
    <property type="evidence" value="ECO:0007669"/>
    <property type="project" value="UniProtKB-UniRule"/>
</dbReference>
<dbReference type="GO" id="GO:0008270">
    <property type="term" value="F:zinc ion binding"/>
    <property type="evidence" value="ECO:0007669"/>
    <property type="project" value="UniProtKB-KW"/>
</dbReference>
<dbReference type="GO" id="GO:0006310">
    <property type="term" value="P:DNA recombination"/>
    <property type="evidence" value="ECO:0007669"/>
    <property type="project" value="UniProtKB-UniRule"/>
</dbReference>
<dbReference type="GO" id="GO:0006281">
    <property type="term" value="P:DNA repair"/>
    <property type="evidence" value="ECO:0007669"/>
    <property type="project" value="UniProtKB-UniRule"/>
</dbReference>
<dbReference type="CDD" id="cd01025">
    <property type="entry name" value="TOPRIM_recR"/>
    <property type="match status" value="1"/>
</dbReference>
<dbReference type="Gene3D" id="3.30.60.80">
    <property type="match status" value="1"/>
</dbReference>
<dbReference type="Gene3D" id="3.40.1360.10">
    <property type="match status" value="1"/>
</dbReference>
<dbReference type="Gene3D" id="6.10.250.240">
    <property type="match status" value="1"/>
</dbReference>
<dbReference type="Gene3D" id="1.10.8.420">
    <property type="entry name" value="RecR Domain 1"/>
    <property type="match status" value="1"/>
</dbReference>
<dbReference type="HAMAP" id="MF_00017">
    <property type="entry name" value="RecR"/>
    <property type="match status" value="1"/>
</dbReference>
<dbReference type="InterPro" id="IPR000093">
    <property type="entry name" value="DNA_Rcmb_RecR"/>
</dbReference>
<dbReference type="InterPro" id="IPR023627">
    <property type="entry name" value="Rcmb_RecR"/>
</dbReference>
<dbReference type="InterPro" id="IPR015967">
    <property type="entry name" value="Rcmb_RecR_Znf"/>
</dbReference>
<dbReference type="InterPro" id="IPR006171">
    <property type="entry name" value="TOPRIM_dom"/>
</dbReference>
<dbReference type="InterPro" id="IPR034137">
    <property type="entry name" value="TOPRIM_RecR"/>
</dbReference>
<dbReference type="NCBIfam" id="TIGR00615">
    <property type="entry name" value="recR"/>
    <property type="match status" value="1"/>
</dbReference>
<dbReference type="PANTHER" id="PTHR30446">
    <property type="entry name" value="RECOMBINATION PROTEIN RECR"/>
    <property type="match status" value="1"/>
</dbReference>
<dbReference type="PANTHER" id="PTHR30446:SF0">
    <property type="entry name" value="RECOMBINATION PROTEIN RECR"/>
    <property type="match status" value="1"/>
</dbReference>
<dbReference type="Pfam" id="PF21175">
    <property type="entry name" value="RecR_C"/>
    <property type="match status" value="1"/>
</dbReference>
<dbReference type="Pfam" id="PF21176">
    <property type="entry name" value="RecR_HhH"/>
    <property type="match status" value="1"/>
</dbReference>
<dbReference type="Pfam" id="PF02132">
    <property type="entry name" value="RecR_ZnF"/>
    <property type="match status" value="1"/>
</dbReference>
<dbReference type="Pfam" id="PF13662">
    <property type="entry name" value="Toprim_4"/>
    <property type="match status" value="1"/>
</dbReference>
<dbReference type="SMART" id="SM00493">
    <property type="entry name" value="TOPRIM"/>
    <property type="match status" value="1"/>
</dbReference>
<dbReference type="SUPFAM" id="SSF111304">
    <property type="entry name" value="Recombination protein RecR"/>
    <property type="match status" value="1"/>
</dbReference>
<dbReference type="PROSITE" id="PS01300">
    <property type="entry name" value="RECR"/>
    <property type="match status" value="1"/>
</dbReference>
<dbReference type="PROSITE" id="PS50880">
    <property type="entry name" value="TOPRIM"/>
    <property type="match status" value="1"/>
</dbReference>
<reference key="1">
    <citation type="submission" date="2009-07" db="EMBL/GenBank/DDBJ databases">
        <title>Complete sequence of Geobacter sp. M21.</title>
        <authorList>
            <consortium name="US DOE Joint Genome Institute"/>
            <person name="Lucas S."/>
            <person name="Copeland A."/>
            <person name="Lapidus A."/>
            <person name="Glavina del Rio T."/>
            <person name="Dalin E."/>
            <person name="Tice H."/>
            <person name="Bruce D."/>
            <person name="Goodwin L."/>
            <person name="Pitluck S."/>
            <person name="Saunders E."/>
            <person name="Brettin T."/>
            <person name="Detter J.C."/>
            <person name="Han C."/>
            <person name="Larimer F."/>
            <person name="Land M."/>
            <person name="Hauser L."/>
            <person name="Kyrpides N."/>
            <person name="Ovchinnikova G."/>
            <person name="Lovley D."/>
        </authorList>
    </citation>
    <scope>NUCLEOTIDE SEQUENCE [LARGE SCALE GENOMIC DNA]</scope>
    <source>
        <strain>M21</strain>
    </source>
</reference>
<accession>C6E8Y9</accession>